<dbReference type="EC" id="3.6.1.66" evidence="1"/>
<dbReference type="EMBL" id="CP000555">
    <property type="protein sequence ID" value="ABM95658.1"/>
    <property type="molecule type" value="Genomic_DNA"/>
</dbReference>
<dbReference type="SMR" id="A2SJB9"/>
<dbReference type="STRING" id="420662.Mpe_A2704"/>
<dbReference type="KEGG" id="mpt:Mpe_A2704"/>
<dbReference type="eggNOG" id="COG0127">
    <property type="taxonomic scope" value="Bacteria"/>
</dbReference>
<dbReference type="HOGENOM" id="CLU_082080_0_3_4"/>
<dbReference type="Proteomes" id="UP000000366">
    <property type="component" value="Chromosome"/>
</dbReference>
<dbReference type="GO" id="GO:0005829">
    <property type="term" value="C:cytosol"/>
    <property type="evidence" value="ECO:0007669"/>
    <property type="project" value="TreeGrafter"/>
</dbReference>
<dbReference type="GO" id="GO:0035870">
    <property type="term" value="F:dITP diphosphatase activity"/>
    <property type="evidence" value="ECO:0007669"/>
    <property type="project" value="RHEA"/>
</dbReference>
<dbReference type="GO" id="GO:0036220">
    <property type="term" value="F:ITP diphosphatase activity"/>
    <property type="evidence" value="ECO:0007669"/>
    <property type="project" value="UniProtKB-EC"/>
</dbReference>
<dbReference type="GO" id="GO:0046872">
    <property type="term" value="F:metal ion binding"/>
    <property type="evidence" value="ECO:0007669"/>
    <property type="project" value="UniProtKB-KW"/>
</dbReference>
<dbReference type="GO" id="GO:0000166">
    <property type="term" value="F:nucleotide binding"/>
    <property type="evidence" value="ECO:0007669"/>
    <property type="project" value="UniProtKB-KW"/>
</dbReference>
<dbReference type="GO" id="GO:0017111">
    <property type="term" value="F:ribonucleoside triphosphate phosphatase activity"/>
    <property type="evidence" value="ECO:0007669"/>
    <property type="project" value="InterPro"/>
</dbReference>
<dbReference type="GO" id="GO:0036222">
    <property type="term" value="F:XTP diphosphatase activity"/>
    <property type="evidence" value="ECO:0007669"/>
    <property type="project" value="RHEA"/>
</dbReference>
<dbReference type="GO" id="GO:0009117">
    <property type="term" value="P:nucleotide metabolic process"/>
    <property type="evidence" value="ECO:0007669"/>
    <property type="project" value="UniProtKB-KW"/>
</dbReference>
<dbReference type="GO" id="GO:0009146">
    <property type="term" value="P:purine nucleoside triphosphate catabolic process"/>
    <property type="evidence" value="ECO:0007669"/>
    <property type="project" value="UniProtKB-UniRule"/>
</dbReference>
<dbReference type="CDD" id="cd00515">
    <property type="entry name" value="HAM1"/>
    <property type="match status" value="1"/>
</dbReference>
<dbReference type="FunFam" id="3.90.950.10:FF:000001">
    <property type="entry name" value="dITP/XTP pyrophosphatase"/>
    <property type="match status" value="1"/>
</dbReference>
<dbReference type="Gene3D" id="3.90.950.10">
    <property type="match status" value="1"/>
</dbReference>
<dbReference type="HAMAP" id="MF_01405">
    <property type="entry name" value="Non_canon_purine_NTPase"/>
    <property type="match status" value="1"/>
</dbReference>
<dbReference type="InterPro" id="IPR020922">
    <property type="entry name" value="dITP/XTP_pyrophosphatase"/>
</dbReference>
<dbReference type="InterPro" id="IPR029001">
    <property type="entry name" value="ITPase-like_fam"/>
</dbReference>
<dbReference type="InterPro" id="IPR002637">
    <property type="entry name" value="RdgB/HAM1"/>
</dbReference>
<dbReference type="NCBIfam" id="TIGR00042">
    <property type="entry name" value="RdgB/HAM1 family non-canonical purine NTP pyrophosphatase"/>
    <property type="match status" value="1"/>
</dbReference>
<dbReference type="PANTHER" id="PTHR11067:SF9">
    <property type="entry name" value="INOSINE TRIPHOSPHATE PYROPHOSPHATASE"/>
    <property type="match status" value="1"/>
</dbReference>
<dbReference type="PANTHER" id="PTHR11067">
    <property type="entry name" value="INOSINE TRIPHOSPHATE PYROPHOSPHATASE/HAM1 PROTEIN"/>
    <property type="match status" value="1"/>
</dbReference>
<dbReference type="Pfam" id="PF01725">
    <property type="entry name" value="Ham1p_like"/>
    <property type="match status" value="1"/>
</dbReference>
<dbReference type="SUPFAM" id="SSF52972">
    <property type="entry name" value="ITPase-like"/>
    <property type="match status" value="1"/>
</dbReference>
<protein>
    <recommendedName>
        <fullName evidence="1">dITP/XTP pyrophosphatase</fullName>
        <ecNumber evidence="1">3.6.1.66</ecNumber>
    </recommendedName>
    <alternativeName>
        <fullName evidence="1">Non-canonical purine NTP pyrophosphatase</fullName>
    </alternativeName>
    <alternativeName>
        <fullName evidence="1">Non-standard purine NTP pyrophosphatase</fullName>
    </alternativeName>
    <alternativeName>
        <fullName evidence="1">Nucleoside-triphosphate diphosphatase</fullName>
    </alternativeName>
    <alternativeName>
        <fullName evidence="1">Nucleoside-triphosphate pyrophosphatase</fullName>
        <shortName evidence="1">NTPase</shortName>
    </alternativeName>
</protein>
<accession>A2SJB9</accession>
<name>IXTPA_METPP</name>
<proteinExistence type="inferred from homology"/>
<reference key="1">
    <citation type="journal article" date="2007" name="J. Bacteriol.">
        <title>Whole-genome analysis of the methyl tert-butyl ether-degrading beta-proteobacterium Methylibium petroleiphilum PM1.</title>
        <authorList>
            <person name="Kane S.R."/>
            <person name="Chakicherla A.Y."/>
            <person name="Chain P.S.G."/>
            <person name="Schmidt R."/>
            <person name="Shin M.W."/>
            <person name="Legler T.C."/>
            <person name="Scow K.M."/>
            <person name="Larimer F.W."/>
            <person name="Lucas S.M."/>
            <person name="Richardson P.M."/>
            <person name="Hristova K.R."/>
        </authorList>
    </citation>
    <scope>NUCLEOTIDE SEQUENCE [LARGE SCALE GENOMIC DNA]</scope>
    <source>
        <strain>ATCC BAA-1232 / LMG 22953 / PM1</strain>
    </source>
</reference>
<feature type="chain" id="PRO_1000068426" description="dITP/XTP pyrophosphatase">
    <location>
        <begin position="1"/>
        <end position="208"/>
    </location>
</feature>
<feature type="active site" description="Proton acceptor" evidence="1">
    <location>
        <position position="68"/>
    </location>
</feature>
<feature type="binding site" evidence="1">
    <location>
        <begin position="7"/>
        <end position="12"/>
    </location>
    <ligand>
        <name>substrate</name>
    </ligand>
</feature>
<feature type="binding site" evidence="1">
    <location>
        <position position="39"/>
    </location>
    <ligand>
        <name>Mg(2+)</name>
        <dbReference type="ChEBI" id="CHEBI:18420"/>
    </ligand>
</feature>
<feature type="binding site" evidence="1">
    <location>
        <position position="68"/>
    </location>
    <ligand>
        <name>Mg(2+)</name>
        <dbReference type="ChEBI" id="CHEBI:18420"/>
    </ligand>
</feature>
<feature type="binding site" evidence="1">
    <location>
        <position position="69"/>
    </location>
    <ligand>
        <name>substrate</name>
    </ligand>
</feature>
<feature type="binding site" evidence="1">
    <location>
        <begin position="162"/>
        <end position="165"/>
    </location>
    <ligand>
        <name>substrate</name>
    </ligand>
</feature>
<feature type="binding site" evidence="1">
    <location>
        <position position="185"/>
    </location>
    <ligand>
        <name>substrate</name>
    </ligand>
</feature>
<feature type="binding site" evidence="1">
    <location>
        <begin position="190"/>
        <end position="191"/>
    </location>
    <ligand>
        <name>substrate</name>
    </ligand>
</feature>
<sequence length="208" mass="22101">MRVVLASNNAKKLVELQRLFAALPIELVTQGSLGIAEAEEPHHTFVENALAKARHAAAEAGCAAIADDSGLCVDALGGAPGVVSAHYATVVLPAADREAQRAVQDAANNALLLDRLQGQADRRASFVSTLVALRHADDPQPLIAFGRWQGEILDAPRGEAGFGYDPLMFIPALGRSVAQMPAEEKSRCSHRALAARDMLALMRAHWLA</sequence>
<gene>
    <name type="ordered locus">Mpe_A2704</name>
</gene>
<comment type="function">
    <text evidence="1">Pyrophosphatase that catalyzes the hydrolysis of nucleoside triphosphates to their monophosphate derivatives, with a high preference for the non-canonical purine nucleotides XTP (xanthosine triphosphate), dITP (deoxyinosine triphosphate) and ITP. Seems to function as a house-cleaning enzyme that removes non-canonical purine nucleotides from the nucleotide pool, thus preventing their incorporation into DNA/RNA and avoiding chromosomal lesions.</text>
</comment>
<comment type="catalytic activity">
    <reaction evidence="1">
        <text>XTP + H2O = XMP + diphosphate + H(+)</text>
        <dbReference type="Rhea" id="RHEA:28610"/>
        <dbReference type="ChEBI" id="CHEBI:15377"/>
        <dbReference type="ChEBI" id="CHEBI:15378"/>
        <dbReference type="ChEBI" id="CHEBI:33019"/>
        <dbReference type="ChEBI" id="CHEBI:57464"/>
        <dbReference type="ChEBI" id="CHEBI:61314"/>
        <dbReference type="EC" id="3.6.1.66"/>
    </reaction>
</comment>
<comment type="catalytic activity">
    <reaction evidence="1">
        <text>dITP + H2O = dIMP + diphosphate + H(+)</text>
        <dbReference type="Rhea" id="RHEA:28342"/>
        <dbReference type="ChEBI" id="CHEBI:15377"/>
        <dbReference type="ChEBI" id="CHEBI:15378"/>
        <dbReference type="ChEBI" id="CHEBI:33019"/>
        <dbReference type="ChEBI" id="CHEBI:61194"/>
        <dbReference type="ChEBI" id="CHEBI:61382"/>
        <dbReference type="EC" id="3.6.1.66"/>
    </reaction>
</comment>
<comment type="catalytic activity">
    <reaction evidence="1">
        <text>ITP + H2O = IMP + diphosphate + H(+)</text>
        <dbReference type="Rhea" id="RHEA:29399"/>
        <dbReference type="ChEBI" id="CHEBI:15377"/>
        <dbReference type="ChEBI" id="CHEBI:15378"/>
        <dbReference type="ChEBI" id="CHEBI:33019"/>
        <dbReference type="ChEBI" id="CHEBI:58053"/>
        <dbReference type="ChEBI" id="CHEBI:61402"/>
        <dbReference type="EC" id="3.6.1.66"/>
    </reaction>
</comment>
<comment type="cofactor">
    <cofactor evidence="1">
        <name>Mg(2+)</name>
        <dbReference type="ChEBI" id="CHEBI:18420"/>
    </cofactor>
    <text evidence="1">Binds 1 Mg(2+) ion per subunit.</text>
</comment>
<comment type="subunit">
    <text evidence="1">Homodimer.</text>
</comment>
<comment type="similarity">
    <text evidence="1">Belongs to the HAM1 NTPase family.</text>
</comment>
<evidence type="ECO:0000255" key="1">
    <source>
        <dbReference type="HAMAP-Rule" id="MF_01405"/>
    </source>
</evidence>
<keyword id="KW-0378">Hydrolase</keyword>
<keyword id="KW-0460">Magnesium</keyword>
<keyword id="KW-0479">Metal-binding</keyword>
<keyword id="KW-0546">Nucleotide metabolism</keyword>
<keyword id="KW-0547">Nucleotide-binding</keyword>
<keyword id="KW-1185">Reference proteome</keyword>
<organism>
    <name type="scientific">Methylibium petroleiphilum (strain ATCC BAA-1232 / LMG 22953 / PM1)</name>
    <dbReference type="NCBI Taxonomy" id="420662"/>
    <lineage>
        <taxon>Bacteria</taxon>
        <taxon>Pseudomonadati</taxon>
        <taxon>Pseudomonadota</taxon>
        <taxon>Betaproteobacteria</taxon>
        <taxon>Burkholderiales</taxon>
        <taxon>Sphaerotilaceae</taxon>
        <taxon>Methylibium</taxon>
    </lineage>
</organism>